<protein>
    <recommendedName>
        <fullName>Histone chaperone RTT106</fullName>
    </recommendedName>
</protein>
<gene>
    <name type="primary">RTT106</name>
    <name type="ordered locus">CAGL0H08041g</name>
</gene>
<name>RT106_CANGA</name>
<organism>
    <name type="scientific">Candida glabrata (strain ATCC 2001 / BCRC 20586 / JCM 3761 / NBRC 0622 / NRRL Y-65 / CBS 138)</name>
    <name type="common">Yeast</name>
    <name type="synonym">Nakaseomyces glabratus</name>
    <dbReference type="NCBI Taxonomy" id="284593"/>
    <lineage>
        <taxon>Eukaryota</taxon>
        <taxon>Fungi</taxon>
        <taxon>Dikarya</taxon>
        <taxon>Ascomycota</taxon>
        <taxon>Saccharomycotina</taxon>
        <taxon>Saccharomycetes</taxon>
        <taxon>Saccharomycetales</taxon>
        <taxon>Saccharomycetaceae</taxon>
        <taxon>Nakaseomyces</taxon>
    </lineage>
</organism>
<dbReference type="EMBL" id="CR380954">
    <property type="protein sequence ID" value="CAG60081.1"/>
    <property type="molecule type" value="Genomic_DNA"/>
</dbReference>
<dbReference type="RefSeq" id="XP_447148.1">
    <property type="nucleotide sequence ID" value="XM_447148.1"/>
</dbReference>
<dbReference type="SMR" id="Q6FRJ6"/>
<dbReference type="FunCoup" id="Q6FRJ6">
    <property type="interactions" value="177"/>
</dbReference>
<dbReference type="STRING" id="284593.Q6FRJ6"/>
<dbReference type="EnsemblFungi" id="CAGL0H08041g-T">
    <property type="protein sequence ID" value="CAGL0H08041g-T-p1"/>
    <property type="gene ID" value="CAGL0H08041g"/>
</dbReference>
<dbReference type="KEGG" id="cgr:2888512"/>
<dbReference type="CGD" id="CAL0131910">
    <property type="gene designation" value="RTT106"/>
</dbReference>
<dbReference type="VEuPathDB" id="FungiDB:B1J91_H08041g"/>
<dbReference type="VEuPathDB" id="FungiDB:CAGL0H08041g"/>
<dbReference type="eggNOG" id="ENOG502R9PE">
    <property type="taxonomic scope" value="Eukaryota"/>
</dbReference>
<dbReference type="HOGENOM" id="CLU_040939_1_0_1"/>
<dbReference type="InParanoid" id="Q6FRJ6"/>
<dbReference type="OMA" id="TRLTFNV"/>
<dbReference type="Proteomes" id="UP000002428">
    <property type="component" value="Chromosome H"/>
</dbReference>
<dbReference type="GO" id="GO:0005694">
    <property type="term" value="C:chromosome"/>
    <property type="evidence" value="ECO:0007669"/>
    <property type="project" value="UniProtKB-SubCell"/>
</dbReference>
<dbReference type="GO" id="GO:0005634">
    <property type="term" value="C:nucleus"/>
    <property type="evidence" value="ECO:0007669"/>
    <property type="project" value="UniProtKB-SubCell"/>
</dbReference>
<dbReference type="GO" id="GO:0003690">
    <property type="term" value="F:double-stranded DNA binding"/>
    <property type="evidence" value="ECO:0000314"/>
    <property type="project" value="CGD"/>
</dbReference>
<dbReference type="GO" id="GO:0042393">
    <property type="term" value="F:histone binding"/>
    <property type="evidence" value="ECO:0007669"/>
    <property type="project" value="EnsemblFungi"/>
</dbReference>
<dbReference type="GO" id="GO:0042802">
    <property type="term" value="F:identical protein binding"/>
    <property type="evidence" value="ECO:0007669"/>
    <property type="project" value="EnsemblFungi"/>
</dbReference>
<dbReference type="GO" id="GO:0031491">
    <property type="term" value="F:nucleosome binding"/>
    <property type="evidence" value="ECO:0007669"/>
    <property type="project" value="TreeGrafter"/>
</dbReference>
<dbReference type="GO" id="GO:0006335">
    <property type="term" value="P:DNA replication-dependent chromatin assembly"/>
    <property type="evidence" value="ECO:0007669"/>
    <property type="project" value="EnsemblFungi"/>
</dbReference>
<dbReference type="GO" id="GO:0031507">
    <property type="term" value="P:heterochromatin formation"/>
    <property type="evidence" value="ECO:0007669"/>
    <property type="project" value="EnsemblFungi"/>
</dbReference>
<dbReference type="GO" id="GO:0000122">
    <property type="term" value="P:negative regulation of transcription by RNA polymerase II"/>
    <property type="evidence" value="ECO:0000315"/>
    <property type="project" value="CGD"/>
</dbReference>
<dbReference type="GO" id="GO:0006368">
    <property type="term" value="P:transcription elongation by RNA polymerase II"/>
    <property type="evidence" value="ECO:0007669"/>
    <property type="project" value="EnsemblFungi"/>
</dbReference>
<dbReference type="CDD" id="cd13303">
    <property type="entry name" value="PH1-like_Rtt106"/>
    <property type="match status" value="1"/>
</dbReference>
<dbReference type="CDD" id="cd11604">
    <property type="entry name" value="RTT106_N"/>
    <property type="match status" value="1"/>
</dbReference>
<dbReference type="Gene3D" id="2.30.29.120">
    <property type="match status" value="1"/>
</dbReference>
<dbReference type="Gene3D" id="2.30.29.30">
    <property type="entry name" value="Pleckstrin-homology domain (PH domain)/Phosphotyrosine-binding domain (PTB)"/>
    <property type="match status" value="1"/>
</dbReference>
<dbReference type="Gene3D" id="6.10.10.70">
    <property type="entry name" value="RTT106-like"/>
    <property type="match status" value="1"/>
</dbReference>
<dbReference type="InterPro" id="IPR011993">
    <property type="entry name" value="PH-like_dom_sf"/>
</dbReference>
<dbReference type="InterPro" id="IPR013719">
    <property type="entry name" value="RTT106/SPT16-like_middle_dom"/>
</dbReference>
<dbReference type="InterPro" id="IPR050454">
    <property type="entry name" value="RTT106/SSRP1_HistChap/FACT"/>
</dbReference>
<dbReference type="InterPro" id="IPR040993">
    <property type="entry name" value="Rtt106_N"/>
</dbReference>
<dbReference type="InterPro" id="IPR044891">
    <property type="entry name" value="Rtt106_N_sf"/>
</dbReference>
<dbReference type="InterPro" id="IPR040770">
    <property type="entry name" value="Rtt106_PH"/>
</dbReference>
<dbReference type="PANTHER" id="PTHR45849">
    <property type="entry name" value="FACT COMPLEX SUBUNIT SSRP1"/>
    <property type="match status" value="1"/>
</dbReference>
<dbReference type="PANTHER" id="PTHR45849:SF3">
    <property type="entry name" value="HISTONE CHAPERONE RTT106"/>
    <property type="match status" value="1"/>
</dbReference>
<dbReference type="Pfam" id="PF18469">
    <property type="entry name" value="PH_18"/>
    <property type="match status" value="1"/>
</dbReference>
<dbReference type="Pfam" id="PF18215">
    <property type="entry name" value="Rtt106_N"/>
    <property type="match status" value="1"/>
</dbReference>
<dbReference type="Pfam" id="PF08512">
    <property type="entry name" value="Rttp106-like_middle"/>
    <property type="match status" value="1"/>
</dbReference>
<dbReference type="SMART" id="SM01287">
    <property type="entry name" value="Rtt106"/>
    <property type="match status" value="1"/>
</dbReference>
<dbReference type="SUPFAM" id="SSF50729">
    <property type="entry name" value="PH domain-like"/>
    <property type="match status" value="1"/>
</dbReference>
<evidence type="ECO:0000250" key="1"/>
<evidence type="ECO:0000256" key="2">
    <source>
        <dbReference type="SAM" id="MobiDB-lite"/>
    </source>
</evidence>
<evidence type="ECO:0000305" key="3"/>
<proteinExistence type="inferred from homology"/>
<keyword id="KW-0143">Chaperone</keyword>
<keyword id="KW-0158">Chromosome</keyword>
<keyword id="KW-0238">DNA-binding</keyword>
<keyword id="KW-0539">Nucleus</keyword>
<keyword id="KW-1185">Reference proteome</keyword>
<keyword id="KW-0804">Transcription</keyword>
<keyword id="KW-0805">Transcription regulation</keyword>
<feature type="chain" id="PRO_0000320488" description="Histone chaperone RTT106">
    <location>
        <begin position="1"/>
        <end position="453"/>
    </location>
</feature>
<feature type="region of interest" description="Disordered" evidence="2">
    <location>
        <begin position="299"/>
        <end position="426"/>
    </location>
</feature>
<feature type="compositionally biased region" description="Low complexity" evidence="2">
    <location>
        <begin position="304"/>
        <end position="315"/>
    </location>
</feature>
<feature type="compositionally biased region" description="Polar residues" evidence="2">
    <location>
        <begin position="316"/>
        <end position="334"/>
    </location>
</feature>
<feature type="compositionally biased region" description="Acidic residues" evidence="2">
    <location>
        <begin position="340"/>
        <end position="395"/>
    </location>
</feature>
<feature type="compositionally biased region" description="Polar residues" evidence="2">
    <location>
        <begin position="397"/>
        <end position="420"/>
    </location>
</feature>
<sequence>MSSFDFLNELPKELQNKIRNITRALPSSLEVFQELYNYGLSHSDNIEKKRKVTSNGVIDEQNIIFSLKNVSVLSPIRKKLDLVLHLSSIDHKPQLSLVKNGVSEFSISNLKDNVKMGTFLPVPEKPNLLYLFVQLKKVNDKDQDPILLTMNKENVLTEFKSMGLIGQEVDDFNKCTEYIRKQAILTGFKIANPFNPSVEQPVPSFHVECHRGTKEGTLYFLPEIIIFGFKKPILVFESSNIESISYSSITRLTFNVTLIKKVDDGYGTKFEFSMIDQTEYSKIDDYVKLKQVKDESMSEELKAKTANKNKQQNNTSDQPSALQEATKQMETEGNINEIPFDSEDDEEADGNFEDNSDLSDGSEVEEEDNEEENEEDEEADGGDYAEEDFEEDEIIQEQANPAVNQLISKTTPINKNSSNAGLFDFPIETPSFDIPIELEDNEDDEEGSGVEYD</sequence>
<comment type="function">
    <text evidence="1">Histones H3 and H4 chaperone involved in the nucleosome formation and heterochromatin silencing. Required for the deposition of H3K56ac-carrying H3-H4 complex onto newly-replicated DNA. Plays a role in the transcriptional regulation of the cell-cycle dependent histone genes by creating a repressive structure at the core histone gene promoter (By similarity).</text>
</comment>
<comment type="subunit">
    <text evidence="1">Interacts with histones H3 and H4.</text>
</comment>
<comment type="subcellular location">
    <subcellularLocation>
        <location evidence="1">Nucleus</location>
    </subcellularLocation>
    <subcellularLocation>
        <location evidence="1">Chromosome</location>
    </subcellularLocation>
</comment>
<comment type="similarity">
    <text evidence="3">Belongs to the RTT106 family.</text>
</comment>
<reference key="1">
    <citation type="journal article" date="2004" name="Nature">
        <title>Genome evolution in yeasts.</title>
        <authorList>
            <person name="Dujon B."/>
            <person name="Sherman D."/>
            <person name="Fischer G."/>
            <person name="Durrens P."/>
            <person name="Casaregola S."/>
            <person name="Lafontaine I."/>
            <person name="de Montigny J."/>
            <person name="Marck C."/>
            <person name="Neuveglise C."/>
            <person name="Talla E."/>
            <person name="Goffard N."/>
            <person name="Frangeul L."/>
            <person name="Aigle M."/>
            <person name="Anthouard V."/>
            <person name="Babour A."/>
            <person name="Barbe V."/>
            <person name="Barnay S."/>
            <person name="Blanchin S."/>
            <person name="Beckerich J.-M."/>
            <person name="Beyne E."/>
            <person name="Bleykasten C."/>
            <person name="Boisrame A."/>
            <person name="Boyer J."/>
            <person name="Cattolico L."/>
            <person name="Confanioleri F."/>
            <person name="de Daruvar A."/>
            <person name="Despons L."/>
            <person name="Fabre E."/>
            <person name="Fairhead C."/>
            <person name="Ferry-Dumazet H."/>
            <person name="Groppi A."/>
            <person name="Hantraye F."/>
            <person name="Hennequin C."/>
            <person name="Jauniaux N."/>
            <person name="Joyet P."/>
            <person name="Kachouri R."/>
            <person name="Kerrest A."/>
            <person name="Koszul R."/>
            <person name="Lemaire M."/>
            <person name="Lesur I."/>
            <person name="Ma L."/>
            <person name="Muller H."/>
            <person name="Nicaud J.-M."/>
            <person name="Nikolski M."/>
            <person name="Oztas S."/>
            <person name="Ozier-Kalogeropoulos O."/>
            <person name="Pellenz S."/>
            <person name="Potier S."/>
            <person name="Richard G.-F."/>
            <person name="Straub M.-L."/>
            <person name="Suleau A."/>
            <person name="Swennen D."/>
            <person name="Tekaia F."/>
            <person name="Wesolowski-Louvel M."/>
            <person name="Westhof E."/>
            <person name="Wirth B."/>
            <person name="Zeniou-Meyer M."/>
            <person name="Zivanovic Y."/>
            <person name="Bolotin-Fukuhara M."/>
            <person name="Thierry A."/>
            <person name="Bouchier C."/>
            <person name="Caudron B."/>
            <person name="Scarpelli C."/>
            <person name="Gaillardin C."/>
            <person name="Weissenbach J."/>
            <person name="Wincker P."/>
            <person name="Souciet J.-L."/>
        </authorList>
    </citation>
    <scope>NUCLEOTIDE SEQUENCE [LARGE SCALE GENOMIC DNA]</scope>
    <source>
        <strain>ATCC 2001 / BCRC 20586 / JCM 3761 / NBRC 0622 / NRRL Y-65 / CBS 138</strain>
    </source>
</reference>
<accession>Q6FRJ6</accession>